<proteinExistence type="inferred from homology"/>
<gene>
    <name evidence="1" type="primary">rpmA</name>
    <name type="ordered locus">Cpar_1593</name>
</gene>
<evidence type="ECO:0000255" key="1">
    <source>
        <dbReference type="HAMAP-Rule" id="MF_00539"/>
    </source>
</evidence>
<evidence type="ECO:0000256" key="2">
    <source>
        <dbReference type="SAM" id="MobiDB-lite"/>
    </source>
</evidence>
<evidence type="ECO:0000305" key="3"/>
<protein>
    <recommendedName>
        <fullName evidence="1">Large ribosomal subunit protein bL27</fullName>
    </recommendedName>
    <alternativeName>
        <fullName evidence="3">50S ribosomal protein L27</fullName>
    </alternativeName>
</protein>
<organism>
    <name type="scientific">Chlorobaculum parvum (strain DSM 263 / NCIMB 8327)</name>
    <name type="common">Chlorobium vibrioforme subsp. thiosulfatophilum</name>
    <dbReference type="NCBI Taxonomy" id="517417"/>
    <lineage>
        <taxon>Bacteria</taxon>
        <taxon>Pseudomonadati</taxon>
        <taxon>Chlorobiota</taxon>
        <taxon>Chlorobiia</taxon>
        <taxon>Chlorobiales</taxon>
        <taxon>Chlorobiaceae</taxon>
        <taxon>Chlorobaculum</taxon>
    </lineage>
</organism>
<feature type="chain" id="PRO_1000128714" description="Large ribosomal subunit protein bL27">
    <location>
        <begin position="1"/>
        <end position="84"/>
    </location>
</feature>
<feature type="region of interest" description="Disordered" evidence="2">
    <location>
        <begin position="1"/>
        <end position="21"/>
    </location>
</feature>
<reference key="1">
    <citation type="submission" date="2008-06" db="EMBL/GenBank/DDBJ databases">
        <title>Complete sequence of Chlorobaculum parvum NCIB 8327.</title>
        <authorList>
            <consortium name="US DOE Joint Genome Institute"/>
            <person name="Lucas S."/>
            <person name="Copeland A."/>
            <person name="Lapidus A."/>
            <person name="Glavina del Rio T."/>
            <person name="Dalin E."/>
            <person name="Tice H."/>
            <person name="Bruce D."/>
            <person name="Goodwin L."/>
            <person name="Pitluck S."/>
            <person name="Schmutz J."/>
            <person name="Larimer F."/>
            <person name="Land M."/>
            <person name="Hauser L."/>
            <person name="Kyrpides N."/>
            <person name="Mikhailova N."/>
            <person name="Zhao F."/>
            <person name="Li T."/>
            <person name="Liu Z."/>
            <person name="Overmann J."/>
            <person name="Bryant D.A."/>
            <person name="Richardson P."/>
        </authorList>
    </citation>
    <scope>NUCLEOTIDE SEQUENCE [LARGE SCALE GENOMIC DNA]</scope>
    <source>
        <strain>DSM 263 / NCIMB 8327</strain>
    </source>
</reference>
<sequence length="84" mass="8753">MAHKKGGGSTKNGRDSNPKYLGVKAAGGSTVNAGTIILRQRGTAIKPGDNAGLGKDHTIFALVDGTVHFRNGRNNKKQVDIIPS</sequence>
<accession>B3QPY8</accession>
<keyword id="KW-0687">Ribonucleoprotein</keyword>
<keyword id="KW-0689">Ribosomal protein</keyword>
<comment type="similarity">
    <text evidence="1">Belongs to the bacterial ribosomal protein bL27 family.</text>
</comment>
<dbReference type="EMBL" id="CP001099">
    <property type="protein sequence ID" value="ACF11991.1"/>
    <property type="molecule type" value="Genomic_DNA"/>
</dbReference>
<dbReference type="RefSeq" id="WP_012502824.1">
    <property type="nucleotide sequence ID" value="NC_011027.1"/>
</dbReference>
<dbReference type="SMR" id="B3QPY8"/>
<dbReference type="STRING" id="517417.Cpar_1593"/>
<dbReference type="KEGG" id="cpc:Cpar_1593"/>
<dbReference type="eggNOG" id="COG0211">
    <property type="taxonomic scope" value="Bacteria"/>
</dbReference>
<dbReference type="HOGENOM" id="CLU_095424_4_1_10"/>
<dbReference type="OrthoDB" id="9803474at2"/>
<dbReference type="Proteomes" id="UP000008811">
    <property type="component" value="Chromosome"/>
</dbReference>
<dbReference type="GO" id="GO:1990904">
    <property type="term" value="C:ribonucleoprotein complex"/>
    <property type="evidence" value="ECO:0007669"/>
    <property type="project" value="UniProtKB-KW"/>
</dbReference>
<dbReference type="GO" id="GO:0005840">
    <property type="term" value="C:ribosome"/>
    <property type="evidence" value="ECO:0007669"/>
    <property type="project" value="UniProtKB-KW"/>
</dbReference>
<dbReference type="GO" id="GO:0003735">
    <property type="term" value="F:structural constituent of ribosome"/>
    <property type="evidence" value="ECO:0007669"/>
    <property type="project" value="InterPro"/>
</dbReference>
<dbReference type="GO" id="GO:0006412">
    <property type="term" value="P:translation"/>
    <property type="evidence" value="ECO:0007669"/>
    <property type="project" value="UniProtKB-UniRule"/>
</dbReference>
<dbReference type="FunFam" id="2.40.50.100:FF:000060">
    <property type="entry name" value="Apicoplast ribosomal protein L27"/>
    <property type="match status" value="1"/>
</dbReference>
<dbReference type="Gene3D" id="2.40.50.100">
    <property type="match status" value="1"/>
</dbReference>
<dbReference type="HAMAP" id="MF_00539">
    <property type="entry name" value="Ribosomal_bL27"/>
    <property type="match status" value="1"/>
</dbReference>
<dbReference type="InterPro" id="IPR001684">
    <property type="entry name" value="Ribosomal_bL27"/>
</dbReference>
<dbReference type="InterPro" id="IPR018261">
    <property type="entry name" value="Ribosomal_bL27_CS"/>
</dbReference>
<dbReference type="NCBIfam" id="TIGR00062">
    <property type="entry name" value="L27"/>
    <property type="match status" value="1"/>
</dbReference>
<dbReference type="PANTHER" id="PTHR15893:SF0">
    <property type="entry name" value="LARGE RIBOSOMAL SUBUNIT PROTEIN BL27M"/>
    <property type="match status" value="1"/>
</dbReference>
<dbReference type="PANTHER" id="PTHR15893">
    <property type="entry name" value="RIBOSOMAL PROTEIN L27"/>
    <property type="match status" value="1"/>
</dbReference>
<dbReference type="Pfam" id="PF01016">
    <property type="entry name" value="Ribosomal_L27"/>
    <property type="match status" value="1"/>
</dbReference>
<dbReference type="PRINTS" id="PR00063">
    <property type="entry name" value="RIBOSOMALL27"/>
</dbReference>
<dbReference type="SUPFAM" id="SSF110324">
    <property type="entry name" value="Ribosomal L27 protein-like"/>
    <property type="match status" value="1"/>
</dbReference>
<dbReference type="PROSITE" id="PS00831">
    <property type="entry name" value="RIBOSOMAL_L27"/>
    <property type="match status" value="1"/>
</dbReference>
<name>RL27_CHLP8</name>